<sequence length="361" mass="37240">MLTQVSATQADSNQASQASQALLDTLYQGHALTRSQSETLFASIVAGDMDPVAMAGMLVALKMRGETTAEITGAADALRSAAKPFPRSADSISTGVLDIVGTGGDGFNTINISTTAAFVAAAAGAKVAKHGNRGVSSKSGSSDLLTHCGIGLTMSPKAASACLDTLGLSFLFAPHYHEGVRHAVPVRQALKTRTIFNILGPLINPAKPEFMLLGVYSPKLLAPIVNVLNALGVKRAMVVYGSGLDEVALHGDTQVAELNNGDIRFYHLTPEELGVERADLNLLTGGEPSDNALITKAILQGKGEAAQRDAVAINAGCALYISGISDSVQAGTKLALATLKTGKAFDVLTQLAEASQTEAQG</sequence>
<protein>
    <recommendedName>
        <fullName evidence="1">Anthranilate phosphoribosyltransferase</fullName>
        <ecNumber evidence="1">2.4.2.18</ecNumber>
    </recommendedName>
</protein>
<organism>
    <name type="scientific">Shewanella denitrificans (strain OS217 / ATCC BAA-1090 / DSM 15013)</name>
    <dbReference type="NCBI Taxonomy" id="318161"/>
    <lineage>
        <taxon>Bacteria</taxon>
        <taxon>Pseudomonadati</taxon>
        <taxon>Pseudomonadota</taxon>
        <taxon>Gammaproteobacteria</taxon>
        <taxon>Alteromonadales</taxon>
        <taxon>Shewanellaceae</taxon>
        <taxon>Shewanella</taxon>
    </lineage>
</organism>
<feature type="chain" id="PRO_0000325463" description="Anthranilate phosphoribosyltransferase">
    <location>
        <begin position="1"/>
        <end position="361"/>
    </location>
</feature>
<feature type="binding site" evidence="1">
    <location>
        <position position="101"/>
    </location>
    <ligand>
        <name>5-phospho-alpha-D-ribose 1-diphosphate</name>
        <dbReference type="ChEBI" id="CHEBI:58017"/>
    </ligand>
</feature>
<feature type="binding site" evidence="1">
    <location>
        <position position="101"/>
    </location>
    <ligand>
        <name>anthranilate</name>
        <dbReference type="ChEBI" id="CHEBI:16567"/>
        <label>1</label>
    </ligand>
</feature>
<feature type="binding site" evidence="1">
    <location>
        <begin position="104"/>
        <end position="105"/>
    </location>
    <ligand>
        <name>5-phospho-alpha-D-ribose 1-diphosphate</name>
        <dbReference type="ChEBI" id="CHEBI:58017"/>
    </ligand>
</feature>
<feature type="binding site" evidence="1">
    <location>
        <position position="109"/>
    </location>
    <ligand>
        <name>5-phospho-alpha-D-ribose 1-diphosphate</name>
        <dbReference type="ChEBI" id="CHEBI:58017"/>
    </ligand>
</feature>
<feature type="binding site" evidence="1">
    <location>
        <begin position="111"/>
        <end position="114"/>
    </location>
    <ligand>
        <name>5-phospho-alpha-D-ribose 1-diphosphate</name>
        <dbReference type="ChEBI" id="CHEBI:58017"/>
    </ligand>
</feature>
<feature type="binding site" evidence="1">
    <location>
        <position position="113"/>
    </location>
    <ligand>
        <name>Mg(2+)</name>
        <dbReference type="ChEBI" id="CHEBI:18420"/>
        <label>1</label>
    </ligand>
</feature>
<feature type="binding site" evidence="1">
    <location>
        <begin position="129"/>
        <end position="137"/>
    </location>
    <ligand>
        <name>5-phospho-alpha-D-ribose 1-diphosphate</name>
        <dbReference type="ChEBI" id="CHEBI:58017"/>
    </ligand>
</feature>
<feature type="binding site" evidence="1">
    <location>
        <position position="132"/>
    </location>
    <ligand>
        <name>anthranilate</name>
        <dbReference type="ChEBI" id="CHEBI:16567"/>
        <label>1</label>
    </ligand>
</feature>
<feature type="binding site" evidence="1">
    <location>
        <position position="141"/>
    </location>
    <ligand>
        <name>5-phospho-alpha-D-ribose 1-diphosphate</name>
        <dbReference type="ChEBI" id="CHEBI:58017"/>
    </ligand>
</feature>
<feature type="binding site" evidence="1">
    <location>
        <position position="187"/>
    </location>
    <ligand>
        <name>anthranilate</name>
        <dbReference type="ChEBI" id="CHEBI:16567"/>
        <label>2</label>
    </ligand>
</feature>
<feature type="binding site" evidence="1">
    <location>
        <position position="245"/>
    </location>
    <ligand>
        <name>Mg(2+)</name>
        <dbReference type="ChEBI" id="CHEBI:18420"/>
        <label>2</label>
    </ligand>
</feature>
<feature type="binding site" evidence="1">
    <location>
        <position position="246"/>
    </location>
    <ligand>
        <name>Mg(2+)</name>
        <dbReference type="ChEBI" id="CHEBI:18420"/>
        <label>1</label>
    </ligand>
</feature>
<feature type="binding site" evidence="1">
    <location>
        <position position="246"/>
    </location>
    <ligand>
        <name>Mg(2+)</name>
        <dbReference type="ChEBI" id="CHEBI:18420"/>
        <label>2</label>
    </ligand>
</feature>
<dbReference type="EC" id="2.4.2.18" evidence="1"/>
<dbReference type="EMBL" id="CP000302">
    <property type="protein sequence ID" value="ABE55732.1"/>
    <property type="molecule type" value="Genomic_DNA"/>
</dbReference>
<dbReference type="RefSeq" id="WP_011496883.1">
    <property type="nucleotide sequence ID" value="NC_007954.1"/>
</dbReference>
<dbReference type="SMR" id="Q12LE4"/>
<dbReference type="STRING" id="318161.Sden_2452"/>
<dbReference type="KEGG" id="sdn:Sden_2452"/>
<dbReference type="eggNOG" id="COG0547">
    <property type="taxonomic scope" value="Bacteria"/>
</dbReference>
<dbReference type="HOGENOM" id="CLU_034315_2_1_6"/>
<dbReference type="OrthoDB" id="9806430at2"/>
<dbReference type="UniPathway" id="UPA00035">
    <property type="reaction ID" value="UER00041"/>
</dbReference>
<dbReference type="Proteomes" id="UP000001982">
    <property type="component" value="Chromosome"/>
</dbReference>
<dbReference type="GO" id="GO:0005829">
    <property type="term" value="C:cytosol"/>
    <property type="evidence" value="ECO:0007669"/>
    <property type="project" value="TreeGrafter"/>
</dbReference>
<dbReference type="GO" id="GO:0004048">
    <property type="term" value="F:anthranilate phosphoribosyltransferase activity"/>
    <property type="evidence" value="ECO:0007669"/>
    <property type="project" value="UniProtKB-UniRule"/>
</dbReference>
<dbReference type="GO" id="GO:0000287">
    <property type="term" value="F:magnesium ion binding"/>
    <property type="evidence" value="ECO:0007669"/>
    <property type="project" value="UniProtKB-UniRule"/>
</dbReference>
<dbReference type="GO" id="GO:0000162">
    <property type="term" value="P:L-tryptophan biosynthetic process"/>
    <property type="evidence" value="ECO:0007669"/>
    <property type="project" value="UniProtKB-UniRule"/>
</dbReference>
<dbReference type="FunFam" id="3.40.1030.10:FF:000002">
    <property type="entry name" value="Anthranilate phosphoribosyltransferase"/>
    <property type="match status" value="1"/>
</dbReference>
<dbReference type="Gene3D" id="3.40.1030.10">
    <property type="entry name" value="Nucleoside phosphorylase/phosphoribosyltransferase catalytic domain"/>
    <property type="match status" value="1"/>
</dbReference>
<dbReference type="Gene3D" id="1.20.970.10">
    <property type="entry name" value="Transferase, Pyrimidine Nucleoside Phosphorylase, Chain C"/>
    <property type="match status" value="1"/>
</dbReference>
<dbReference type="HAMAP" id="MF_00211">
    <property type="entry name" value="TrpD"/>
    <property type="match status" value="1"/>
</dbReference>
<dbReference type="InterPro" id="IPR005940">
    <property type="entry name" value="Anthranilate_Pribosyl_Tfrase"/>
</dbReference>
<dbReference type="InterPro" id="IPR000312">
    <property type="entry name" value="Glycosyl_Trfase_fam3"/>
</dbReference>
<dbReference type="InterPro" id="IPR017459">
    <property type="entry name" value="Glycosyl_Trfase_fam3_N_dom"/>
</dbReference>
<dbReference type="InterPro" id="IPR036320">
    <property type="entry name" value="Glycosyl_Trfase_fam3_N_dom_sf"/>
</dbReference>
<dbReference type="InterPro" id="IPR035902">
    <property type="entry name" value="Nuc_phospho_transferase"/>
</dbReference>
<dbReference type="NCBIfam" id="TIGR01245">
    <property type="entry name" value="trpD"/>
    <property type="match status" value="1"/>
</dbReference>
<dbReference type="PANTHER" id="PTHR43285">
    <property type="entry name" value="ANTHRANILATE PHOSPHORIBOSYLTRANSFERASE"/>
    <property type="match status" value="1"/>
</dbReference>
<dbReference type="PANTHER" id="PTHR43285:SF2">
    <property type="entry name" value="ANTHRANILATE PHOSPHORIBOSYLTRANSFERASE"/>
    <property type="match status" value="1"/>
</dbReference>
<dbReference type="Pfam" id="PF02885">
    <property type="entry name" value="Glycos_trans_3N"/>
    <property type="match status" value="1"/>
</dbReference>
<dbReference type="Pfam" id="PF00591">
    <property type="entry name" value="Glycos_transf_3"/>
    <property type="match status" value="1"/>
</dbReference>
<dbReference type="SUPFAM" id="SSF52418">
    <property type="entry name" value="Nucleoside phosphorylase/phosphoribosyltransferase catalytic domain"/>
    <property type="match status" value="1"/>
</dbReference>
<dbReference type="SUPFAM" id="SSF47648">
    <property type="entry name" value="Nucleoside phosphorylase/phosphoribosyltransferase N-terminal domain"/>
    <property type="match status" value="1"/>
</dbReference>
<name>TRPD_SHEDO</name>
<accession>Q12LE4</accession>
<gene>
    <name evidence="1" type="primary">trpD</name>
    <name type="ordered locus">Sden_2452</name>
</gene>
<reference key="1">
    <citation type="submission" date="2006-03" db="EMBL/GenBank/DDBJ databases">
        <title>Complete sequence of Shewanella denitrificans OS217.</title>
        <authorList>
            <consortium name="US DOE Joint Genome Institute"/>
            <person name="Copeland A."/>
            <person name="Lucas S."/>
            <person name="Lapidus A."/>
            <person name="Barry K."/>
            <person name="Detter J.C."/>
            <person name="Glavina del Rio T."/>
            <person name="Hammon N."/>
            <person name="Israni S."/>
            <person name="Dalin E."/>
            <person name="Tice H."/>
            <person name="Pitluck S."/>
            <person name="Brettin T."/>
            <person name="Bruce D."/>
            <person name="Han C."/>
            <person name="Tapia R."/>
            <person name="Gilna P."/>
            <person name="Kiss H."/>
            <person name="Schmutz J."/>
            <person name="Larimer F."/>
            <person name="Land M."/>
            <person name="Hauser L."/>
            <person name="Kyrpides N."/>
            <person name="Lykidis A."/>
            <person name="Richardson P."/>
        </authorList>
    </citation>
    <scope>NUCLEOTIDE SEQUENCE [LARGE SCALE GENOMIC DNA]</scope>
    <source>
        <strain>OS217 / ATCC BAA-1090 / DSM 15013</strain>
    </source>
</reference>
<proteinExistence type="inferred from homology"/>
<evidence type="ECO:0000255" key="1">
    <source>
        <dbReference type="HAMAP-Rule" id="MF_00211"/>
    </source>
</evidence>
<keyword id="KW-0028">Amino-acid biosynthesis</keyword>
<keyword id="KW-0057">Aromatic amino acid biosynthesis</keyword>
<keyword id="KW-0328">Glycosyltransferase</keyword>
<keyword id="KW-0460">Magnesium</keyword>
<keyword id="KW-0479">Metal-binding</keyword>
<keyword id="KW-1185">Reference proteome</keyword>
<keyword id="KW-0808">Transferase</keyword>
<keyword id="KW-0822">Tryptophan biosynthesis</keyword>
<comment type="function">
    <text evidence="1">Catalyzes the transfer of the phosphoribosyl group of 5-phosphorylribose-1-pyrophosphate (PRPP) to anthranilate to yield N-(5'-phosphoribosyl)-anthranilate (PRA).</text>
</comment>
<comment type="catalytic activity">
    <reaction evidence="1">
        <text>N-(5-phospho-beta-D-ribosyl)anthranilate + diphosphate = 5-phospho-alpha-D-ribose 1-diphosphate + anthranilate</text>
        <dbReference type="Rhea" id="RHEA:11768"/>
        <dbReference type="ChEBI" id="CHEBI:16567"/>
        <dbReference type="ChEBI" id="CHEBI:18277"/>
        <dbReference type="ChEBI" id="CHEBI:33019"/>
        <dbReference type="ChEBI" id="CHEBI:58017"/>
        <dbReference type="EC" id="2.4.2.18"/>
    </reaction>
</comment>
<comment type="cofactor">
    <cofactor evidence="1">
        <name>Mg(2+)</name>
        <dbReference type="ChEBI" id="CHEBI:18420"/>
    </cofactor>
    <text evidence="1">Binds 2 magnesium ions per monomer.</text>
</comment>
<comment type="pathway">
    <text evidence="1">Amino-acid biosynthesis; L-tryptophan biosynthesis; L-tryptophan from chorismate: step 2/5.</text>
</comment>
<comment type="subunit">
    <text evidence="1">Homodimer.</text>
</comment>
<comment type="similarity">
    <text evidence="1">Belongs to the anthranilate phosphoribosyltransferase family.</text>
</comment>